<proteinExistence type="inferred from homology"/>
<reference key="1">
    <citation type="submission" date="2004-12" db="EMBL/GenBank/DDBJ databases">
        <title>The genome sequence of Borrelia hermsii and Borrelia turicatae: comparative analysis of two agents of endemic N. America relapsing fever.</title>
        <authorList>
            <person name="Porcella S.F."/>
            <person name="Raffel S.J."/>
            <person name="Schrumpf M.E."/>
            <person name="Montgomery B."/>
            <person name="Smith T."/>
            <person name="Schwan T.G."/>
        </authorList>
    </citation>
    <scope>NUCLEOTIDE SEQUENCE [LARGE SCALE GENOMIC DNA]</scope>
    <source>
        <strain>HS1 / DAH</strain>
    </source>
</reference>
<comment type="function">
    <text evidence="1">Aspartyl-tRNA synthetase with relaxed tRNA specificity since it is able to aspartylate not only its cognate tRNA(Asp) but also tRNA(Asn). Reaction proceeds in two steps: L-aspartate is first activated by ATP to form Asp-AMP and then transferred to the acceptor end of tRNA(Asp/Asn).</text>
</comment>
<comment type="catalytic activity">
    <reaction evidence="1">
        <text>tRNA(Asx) + L-aspartate + ATP = L-aspartyl-tRNA(Asx) + AMP + diphosphate</text>
        <dbReference type="Rhea" id="RHEA:18349"/>
        <dbReference type="Rhea" id="RHEA-COMP:9710"/>
        <dbReference type="Rhea" id="RHEA-COMP:9711"/>
        <dbReference type="ChEBI" id="CHEBI:29991"/>
        <dbReference type="ChEBI" id="CHEBI:30616"/>
        <dbReference type="ChEBI" id="CHEBI:33019"/>
        <dbReference type="ChEBI" id="CHEBI:78442"/>
        <dbReference type="ChEBI" id="CHEBI:78516"/>
        <dbReference type="ChEBI" id="CHEBI:456215"/>
        <dbReference type="EC" id="6.1.1.23"/>
    </reaction>
</comment>
<comment type="subunit">
    <text evidence="1">Homodimer.</text>
</comment>
<comment type="subcellular location">
    <subcellularLocation>
        <location evidence="1">Cytoplasm</location>
    </subcellularLocation>
</comment>
<comment type="similarity">
    <text evidence="1">Belongs to the class-II aminoacyl-tRNA synthetase family. Type 1 subfamily.</text>
</comment>
<keyword id="KW-0030">Aminoacyl-tRNA synthetase</keyword>
<keyword id="KW-0067">ATP-binding</keyword>
<keyword id="KW-0963">Cytoplasm</keyword>
<keyword id="KW-0436">Ligase</keyword>
<keyword id="KW-0547">Nucleotide-binding</keyword>
<keyword id="KW-0648">Protein biosynthesis</keyword>
<gene>
    <name evidence="1" type="primary">aspS</name>
    <name type="ordered locus">BH0446</name>
</gene>
<name>SYDND_BORHD</name>
<protein>
    <recommendedName>
        <fullName evidence="1">Aspartate--tRNA(Asp/Asn) ligase</fullName>
        <ecNumber evidence="1">6.1.1.23</ecNumber>
    </recommendedName>
    <alternativeName>
        <fullName evidence="1">Aspartyl-tRNA synthetase</fullName>
        <shortName evidence="1">AspRS</shortName>
    </alternativeName>
    <alternativeName>
        <fullName evidence="1">Non-discriminating aspartyl-tRNA synthetase</fullName>
        <shortName evidence="1">ND-AspRS</shortName>
    </alternativeName>
</protein>
<dbReference type="EC" id="6.1.1.23" evidence="1"/>
<dbReference type="EMBL" id="CP000048">
    <property type="protein sequence ID" value="AAX16956.1"/>
    <property type="molecule type" value="Genomic_DNA"/>
</dbReference>
<dbReference type="RefSeq" id="WP_012422212.1">
    <property type="nucleotide sequence ID" value="NZ_CP073136.1"/>
</dbReference>
<dbReference type="SMR" id="B2S0F0"/>
<dbReference type="KEGG" id="bhr:BH0446"/>
<dbReference type="HOGENOM" id="CLU_014330_3_2_12"/>
<dbReference type="Proteomes" id="UP000008834">
    <property type="component" value="Chromosome"/>
</dbReference>
<dbReference type="GO" id="GO:0005737">
    <property type="term" value="C:cytoplasm"/>
    <property type="evidence" value="ECO:0007669"/>
    <property type="project" value="UniProtKB-SubCell"/>
</dbReference>
<dbReference type="GO" id="GO:0004815">
    <property type="term" value="F:aspartate-tRNA ligase activity"/>
    <property type="evidence" value="ECO:0007669"/>
    <property type="project" value="UniProtKB-UniRule"/>
</dbReference>
<dbReference type="GO" id="GO:0050560">
    <property type="term" value="F:aspartate-tRNA(Asn) ligase activity"/>
    <property type="evidence" value="ECO:0007669"/>
    <property type="project" value="UniProtKB-EC"/>
</dbReference>
<dbReference type="GO" id="GO:0005524">
    <property type="term" value="F:ATP binding"/>
    <property type="evidence" value="ECO:0007669"/>
    <property type="project" value="UniProtKB-UniRule"/>
</dbReference>
<dbReference type="GO" id="GO:0003676">
    <property type="term" value="F:nucleic acid binding"/>
    <property type="evidence" value="ECO:0007669"/>
    <property type="project" value="InterPro"/>
</dbReference>
<dbReference type="GO" id="GO:0006422">
    <property type="term" value="P:aspartyl-tRNA aminoacylation"/>
    <property type="evidence" value="ECO:0007669"/>
    <property type="project" value="UniProtKB-UniRule"/>
</dbReference>
<dbReference type="CDD" id="cd00777">
    <property type="entry name" value="AspRS_core"/>
    <property type="match status" value="1"/>
</dbReference>
<dbReference type="CDD" id="cd04317">
    <property type="entry name" value="EcAspRS_like_N"/>
    <property type="match status" value="1"/>
</dbReference>
<dbReference type="Gene3D" id="3.30.930.10">
    <property type="entry name" value="Bira Bifunctional Protein, Domain 2"/>
    <property type="match status" value="1"/>
</dbReference>
<dbReference type="Gene3D" id="3.30.1360.30">
    <property type="entry name" value="GAD-like domain"/>
    <property type="match status" value="1"/>
</dbReference>
<dbReference type="Gene3D" id="2.40.50.140">
    <property type="entry name" value="Nucleic acid-binding proteins"/>
    <property type="match status" value="1"/>
</dbReference>
<dbReference type="HAMAP" id="MF_00044">
    <property type="entry name" value="Asp_tRNA_synth_type1"/>
    <property type="match status" value="1"/>
</dbReference>
<dbReference type="InterPro" id="IPR004364">
    <property type="entry name" value="Aa-tRNA-synt_II"/>
</dbReference>
<dbReference type="InterPro" id="IPR006195">
    <property type="entry name" value="aa-tRNA-synth_II"/>
</dbReference>
<dbReference type="InterPro" id="IPR045864">
    <property type="entry name" value="aa-tRNA-synth_II/BPL/LPL"/>
</dbReference>
<dbReference type="InterPro" id="IPR004524">
    <property type="entry name" value="Asp-tRNA-ligase_1"/>
</dbReference>
<dbReference type="InterPro" id="IPR047089">
    <property type="entry name" value="Asp-tRNA-ligase_1_N"/>
</dbReference>
<dbReference type="InterPro" id="IPR002312">
    <property type="entry name" value="Asp/Asn-tRNA-synth_IIb"/>
</dbReference>
<dbReference type="InterPro" id="IPR047090">
    <property type="entry name" value="AspRS_core"/>
</dbReference>
<dbReference type="InterPro" id="IPR004115">
    <property type="entry name" value="GAD-like_sf"/>
</dbReference>
<dbReference type="InterPro" id="IPR029351">
    <property type="entry name" value="GAD_dom"/>
</dbReference>
<dbReference type="InterPro" id="IPR012340">
    <property type="entry name" value="NA-bd_OB-fold"/>
</dbReference>
<dbReference type="InterPro" id="IPR004365">
    <property type="entry name" value="NA-bd_OB_tRNA"/>
</dbReference>
<dbReference type="NCBIfam" id="TIGR00459">
    <property type="entry name" value="aspS_bact"/>
    <property type="match status" value="1"/>
</dbReference>
<dbReference type="NCBIfam" id="NF001750">
    <property type="entry name" value="PRK00476.1"/>
    <property type="match status" value="1"/>
</dbReference>
<dbReference type="PANTHER" id="PTHR22594:SF5">
    <property type="entry name" value="ASPARTATE--TRNA LIGASE, MITOCHONDRIAL"/>
    <property type="match status" value="1"/>
</dbReference>
<dbReference type="PANTHER" id="PTHR22594">
    <property type="entry name" value="ASPARTYL/LYSYL-TRNA SYNTHETASE"/>
    <property type="match status" value="1"/>
</dbReference>
<dbReference type="Pfam" id="PF02938">
    <property type="entry name" value="GAD"/>
    <property type="match status" value="1"/>
</dbReference>
<dbReference type="Pfam" id="PF00152">
    <property type="entry name" value="tRNA-synt_2"/>
    <property type="match status" value="1"/>
</dbReference>
<dbReference type="Pfam" id="PF01336">
    <property type="entry name" value="tRNA_anti-codon"/>
    <property type="match status" value="1"/>
</dbReference>
<dbReference type="PRINTS" id="PR01042">
    <property type="entry name" value="TRNASYNTHASP"/>
</dbReference>
<dbReference type="SUPFAM" id="SSF55681">
    <property type="entry name" value="Class II aaRS and biotin synthetases"/>
    <property type="match status" value="1"/>
</dbReference>
<dbReference type="SUPFAM" id="SSF55261">
    <property type="entry name" value="GAD domain-like"/>
    <property type="match status" value="1"/>
</dbReference>
<dbReference type="SUPFAM" id="SSF50249">
    <property type="entry name" value="Nucleic acid-binding proteins"/>
    <property type="match status" value="1"/>
</dbReference>
<dbReference type="PROSITE" id="PS50862">
    <property type="entry name" value="AA_TRNA_LIGASE_II"/>
    <property type="match status" value="1"/>
</dbReference>
<accession>B2S0F0</accession>
<feature type="chain" id="PRO_1000090963" description="Aspartate--tRNA(Asp/Asn) ligase">
    <location>
        <begin position="1"/>
        <end position="585"/>
    </location>
</feature>
<feature type="region of interest" description="Aspartate" evidence="1">
    <location>
        <begin position="196"/>
        <end position="199"/>
    </location>
</feature>
<feature type="binding site" evidence="1">
    <location>
        <position position="172"/>
    </location>
    <ligand>
        <name>L-aspartate</name>
        <dbReference type="ChEBI" id="CHEBI:29991"/>
    </ligand>
</feature>
<feature type="binding site" evidence="1">
    <location>
        <begin position="218"/>
        <end position="220"/>
    </location>
    <ligand>
        <name>ATP</name>
        <dbReference type="ChEBI" id="CHEBI:30616"/>
    </ligand>
</feature>
<feature type="binding site" evidence="1">
    <location>
        <position position="218"/>
    </location>
    <ligand>
        <name>L-aspartate</name>
        <dbReference type="ChEBI" id="CHEBI:29991"/>
    </ligand>
</feature>
<feature type="binding site" evidence="1">
    <location>
        <position position="227"/>
    </location>
    <ligand>
        <name>ATP</name>
        <dbReference type="ChEBI" id="CHEBI:30616"/>
    </ligand>
</feature>
<feature type="binding site" evidence="1">
    <location>
        <position position="445"/>
    </location>
    <ligand>
        <name>L-aspartate</name>
        <dbReference type="ChEBI" id="CHEBI:29991"/>
    </ligand>
</feature>
<feature type="binding site" evidence="1">
    <location>
        <position position="479"/>
    </location>
    <ligand>
        <name>ATP</name>
        <dbReference type="ChEBI" id="CHEBI:30616"/>
    </ligand>
</feature>
<feature type="binding site" evidence="1">
    <location>
        <position position="486"/>
    </location>
    <ligand>
        <name>L-aspartate</name>
        <dbReference type="ChEBI" id="CHEBI:29991"/>
    </ligand>
</feature>
<feature type="binding site" evidence="1">
    <location>
        <begin position="531"/>
        <end position="534"/>
    </location>
    <ligand>
        <name>ATP</name>
        <dbReference type="ChEBI" id="CHEBI:30616"/>
    </ligand>
</feature>
<feature type="site" description="Important for tRNA non-discrimination" evidence="1">
    <location>
        <position position="31"/>
    </location>
</feature>
<organism>
    <name type="scientific">Borrelia hermsii (strain HS1 / DAH)</name>
    <dbReference type="NCBI Taxonomy" id="314723"/>
    <lineage>
        <taxon>Bacteria</taxon>
        <taxon>Pseudomonadati</taxon>
        <taxon>Spirochaetota</taxon>
        <taxon>Spirochaetia</taxon>
        <taxon>Spirochaetales</taxon>
        <taxon>Borreliaceae</taxon>
        <taxon>Borrelia</taxon>
    </lineage>
</organism>
<sequence>MFKTIRCNQINDKLVNQRIEINAWVKKIRHHGKVTFINLRDRYDEAQVLVSDENLLKITSQIKMEYCIKVQGTLELRPLELANKEMKTGAFEILAENIDIISRCNELPFMIEDNNNANDNAKLEYRYLDLRREEQKQKIILRSKVTHIIRNYLTKKDFLELETPTFVKSTPEGARDFLVPSRIHKGHFYALPQSPQIYKQLTMVAGLDKYFQIARCYRDEDSRGDRQPEFTQLDLEMSFIKKENIFKLMENLMFTIFKNTLNIALPKKFKKMTYKHAMNTYGSDKPDTRYELLIQDMSKHFKKSSFNVFQDMLQNKGTIKALIIKNQAHNFSRSKINNLEEHAKIYKARGLYFAKIENNEFSGGIAKFLNEIKQTLIEAYSLANNDIIFFIADSWETACKAMGQVRIKIATELNLINKNIFEFLWIYDFPLFEYDEDTKSYQAAHHMFSLPKQKYIHTLESNPSKVLGEVYDLVLNGMELGSGSIRVHTRELQQRIFNIVGFKNEIAEERFGFFLKALEYGAPIHGGIAIGIDRLLMLMTHSSSIKDVILFPKNSFAASPLDKSPSRISNEQLRELNLTIENYKN</sequence>
<evidence type="ECO:0000255" key="1">
    <source>
        <dbReference type="HAMAP-Rule" id="MF_00044"/>
    </source>
</evidence>